<organism>
    <name type="scientific">Mycobacterium bovis (strain ATCC BAA-935 / AF2122/97)</name>
    <dbReference type="NCBI Taxonomy" id="233413"/>
    <lineage>
        <taxon>Bacteria</taxon>
        <taxon>Bacillati</taxon>
        <taxon>Actinomycetota</taxon>
        <taxon>Actinomycetes</taxon>
        <taxon>Mycobacteriales</taxon>
        <taxon>Mycobacteriaceae</taxon>
        <taxon>Mycobacterium</taxon>
        <taxon>Mycobacterium tuberculosis complex</taxon>
    </lineage>
</organism>
<gene>
    <name type="ordered locus">BQ2027_MB2911</name>
</gene>
<comment type="function">
    <text evidence="1">Represses expression of the HQNO methyltransferase htm gene by binding to its promoter region.</text>
</comment>
<comment type="subunit">
    <text evidence="1">Homodimer.</text>
</comment>
<keyword id="KW-0238">DNA-binding</keyword>
<keyword id="KW-1185">Reference proteome</keyword>
<keyword id="KW-0678">Repressor</keyword>
<keyword id="KW-0804">Transcription</keyword>
<keyword id="KW-0805">Transcription regulation</keyword>
<reference key="1">
    <citation type="journal article" date="2003" name="Proc. Natl. Acad. Sci. U.S.A.">
        <title>The complete genome sequence of Mycobacterium bovis.</title>
        <authorList>
            <person name="Garnier T."/>
            <person name="Eiglmeier K."/>
            <person name="Camus J.-C."/>
            <person name="Medina N."/>
            <person name="Mansoor H."/>
            <person name="Pryor M."/>
            <person name="Duthoy S."/>
            <person name="Grondin S."/>
            <person name="Lacroix C."/>
            <person name="Monsempe C."/>
            <person name="Simon S."/>
            <person name="Harris B."/>
            <person name="Atkin R."/>
            <person name="Doggett J."/>
            <person name="Mayes R."/>
            <person name="Keating L."/>
            <person name="Wheeler P.R."/>
            <person name="Parkhill J."/>
            <person name="Barrell B.G."/>
            <person name="Cole S.T."/>
            <person name="Gordon S.V."/>
            <person name="Hewinson R.G."/>
        </authorList>
    </citation>
    <scope>NUCLEOTIDE SEQUENCE [LARGE SCALE GENOMIC DNA]</scope>
    <source>
        <strain>ATCC BAA-935 / AF2122/97</strain>
    </source>
</reference>
<reference key="2">
    <citation type="journal article" date="2017" name="Genome Announc.">
        <title>Updated reference genome sequence and annotation of Mycobacterium bovis AF2122/97.</title>
        <authorList>
            <person name="Malone K.M."/>
            <person name="Farrell D."/>
            <person name="Stuber T.P."/>
            <person name="Schubert O.T."/>
            <person name="Aebersold R."/>
            <person name="Robbe-Austerman S."/>
            <person name="Gordon S.V."/>
        </authorList>
    </citation>
    <scope>NUCLEOTIDE SEQUENCE [LARGE SCALE GENOMIC DNA]</scope>
    <scope>GENOME REANNOTATION</scope>
    <source>
        <strain>ATCC BAA-935 / AF2122/97</strain>
    </source>
</reference>
<sequence>MGLADDAPLGYLLYRVGAVLRPEVSAALSPLGLTLPEFVCLRMLSQSPGLSSAELARHASVTPQAMNTVLRKLEDAGAVARPASVSSGRSLPATLTARGRALAKRAEAVVRAADARVLARLTAPQQREFKRMLEKLGSD</sequence>
<accession>P67748</accession>
<accession>A0A1R3Y2G9</accession>
<accession>Q10810</accession>
<accession>X2BM43</accession>
<proteinExistence type="inferred from homology"/>
<protein>
    <recommendedName>
        <fullName evidence="1">HTH-type transcriptional repressor Mb2911</fullName>
    </recommendedName>
</protein>
<dbReference type="EMBL" id="LT708304">
    <property type="protein sequence ID" value="SIU01532.1"/>
    <property type="molecule type" value="Genomic_DNA"/>
</dbReference>
<dbReference type="RefSeq" id="NP_856556.1">
    <property type="nucleotide sequence ID" value="NC_002945.3"/>
</dbReference>
<dbReference type="RefSeq" id="WP_003899525.1">
    <property type="nucleotide sequence ID" value="NC_002945.4"/>
</dbReference>
<dbReference type="SMR" id="P67748"/>
<dbReference type="KEGG" id="mbo:BQ2027_MB2911"/>
<dbReference type="PATRIC" id="fig|233413.5.peg.3195"/>
<dbReference type="Proteomes" id="UP000001419">
    <property type="component" value="Chromosome"/>
</dbReference>
<dbReference type="GO" id="GO:0003677">
    <property type="term" value="F:DNA binding"/>
    <property type="evidence" value="ECO:0007669"/>
    <property type="project" value="UniProtKB-KW"/>
</dbReference>
<dbReference type="GO" id="GO:0003700">
    <property type="term" value="F:DNA-binding transcription factor activity"/>
    <property type="evidence" value="ECO:0007669"/>
    <property type="project" value="InterPro"/>
</dbReference>
<dbReference type="GO" id="GO:0006950">
    <property type="term" value="P:response to stress"/>
    <property type="evidence" value="ECO:0007669"/>
    <property type="project" value="TreeGrafter"/>
</dbReference>
<dbReference type="Gene3D" id="1.10.10.10">
    <property type="entry name" value="Winged helix-like DNA-binding domain superfamily/Winged helix DNA-binding domain"/>
    <property type="match status" value="1"/>
</dbReference>
<dbReference type="InterPro" id="IPR000835">
    <property type="entry name" value="HTH_MarR-typ"/>
</dbReference>
<dbReference type="InterPro" id="IPR039422">
    <property type="entry name" value="MarR/SlyA-like"/>
</dbReference>
<dbReference type="InterPro" id="IPR023187">
    <property type="entry name" value="Tscrpt_reg_MarR-type_CS"/>
</dbReference>
<dbReference type="InterPro" id="IPR036388">
    <property type="entry name" value="WH-like_DNA-bd_sf"/>
</dbReference>
<dbReference type="InterPro" id="IPR036390">
    <property type="entry name" value="WH_DNA-bd_sf"/>
</dbReference>
<dbReference type="PANTHER" id="PTHR33164:SF43">
    <property type="entry name" value="HTH-TYPE TRANSCRIPTIONAL REPRESSOR YETL"/>
    <property type="match status" value="1"/>
</dbReference>
<dbReference type="PANTHER" id="PTHR33164">
    <property type="entry name" value="TRANSCRIPTIONAL REGULATOR, MARR FAMILY"/>
    <property type="match status" value="1"/>
</dbReference>
<dbReference type="Pfam" id="PF01047">
    <property type="entry name" value="MarR"/>
    <property type="match status" value="1"/>
</dbReference>
<dbReference type="PRINTS" id="PR00598">
    <property type="entry name" value="HTHMARR"/>
</dbReference>
<dbReference type="SMART" id="SM00347">
    <property type="entry name" value="HTH_MARR"/>
    <property type="match status" value="1"/>
</dbReference>
<dbReference type="SUPFAM" id="SSF46785">
    <property type="entry name" value="Winged helix' DNA-binding domain"/>
    <property type="match status" value="1"/>
</dbReference>
<dbReference type="PROSITE" id="PS01117">
    <property type="entry name" value="HTH_MARR_1"/>
    <property type="match status" value="1"/>
</dbReference>
<dbReference type="PROSITE" id="PS50995">
    <property type="entry name" value="HTH_MARR_2"/>
    <property type="match status" value="1"/>
</dbReference>
<feature type="chain" id="PRO_0000054411" description="HTH-type transcriptional repressor Mb2911">
    <location>
        <begin position="1"/>
        <end position="139"/>
    </location>
</feature>
<feature type="domain" description="HTH marR-type" evidence="2">
    <location>
        <begin position="6"/>
        <end position="138"/>
    </location>
</feature>
<evidence type="ECO:0000250" key="1">
    <source>
        <dbReference type="UniProtKB" id="P9WME9"/>
    </source>
</evidence>
<evidence type="ECO:0000255" key="2">
    <source>
        <dbReference type="PROSITE-ProRule" id="PRU00345"/>
    </source>
</evidence>
<name>HTMR_MYCBO</name>